<name>ENA2_HORSE</name>
<keyword id="KW-0044">Antibiotic</keyword>
<keyword id="KW-0929">Antimicrobial</keyword>
<keyword id="KW-0903">Direct protein sequencing</keyword>
<keyword id="KW-0646">Protease inhibitor</keyword>
<keyword id="KW-1185">Reference proteome</keyword>
<proteinExistence type="evidence at protein level"/>
<protein>
    <recommendedName>
        <fullName>Antimicrobial peptide eNAP-2</fullName>
    </recommendedName>
</protein>
<comment type="function">
    <text>Has antibiotic activity against several equine uterine pathogens; S.zooepidemicus, E.coli and P.aeruginosa. Highly efficient against S.zoopedemicus. Not active against K.pneumoniae. Selectively inactivates microbial serine proteases (subtilisin A and proteinase K) without inhibiting mammalian serine proteases (human neutrophil elastase, human cathepsin G and bovine pancreatic trypsin).</text>
</comment>
<sequence length="46" mass="4769">EVERKHPLGGSRPGRCPTVPPGTFGHCACLCTGDASEPKGQKCCSN</sequence>
<feature type="chain" id="PRO_0000188987" description="Antimicrobial peptide eNAP-2">
    <location>
        <begin position="1"/>
        <end position="46" status="greater than"/>
    </location>
</feature>
<feature type="domain" description="WAP" evidence="1">
    <location>
        <begin position="12"/>
        <end position="46" status="greater than"/>
    </location>
</feature>
<feature type="non-terminal residue">
    <location>
        <position position="46"/>
    </location>
</feature>
<dbReference type="PIR" id="A49212">
    <property type="entry name" value="A49212"/>
</dbReference>
<dbReference type="SMR" id="P56928"/>
<dbReference type="InParanoid" id="P56928"/>
<dbReference type="Proteomes" id="UP000002281">
    <property type="component" value="Unplaced"/>
</dbReference>
<dbReference type="GO" id="GO:0005615">
    <property type="term" value="C:extracellular space"/>
    <property type="evidence" value="ECO:0000318"/>
    <property type="project" value="GO_Central"/>
</dbReference>
<dbReference type="GO" id="GO:0004867">
    <property type="term" value="F:serine-type endopeptidase inhibitor activity"/>
    <property type="evidence" value="ECO:0000318"/>
    <property type="project" value="GO_Central"/>
</dbReference>
<dbReference type="GO" id="GO:0019731">
    <property type="term" value="P:antibacterial humoral response"/>
    <property type="evidence" value="ECO:0000318"/>
    <property type="project" value="GO_Central"/>
</dbReference>
<dbReference type="GO" id="GO:0045087">
    <property type="term" value="P:innate immune response"/>
    <property type="evidence" value="ECO:0000318"/>
    <property type="project" value="GO_Central"/>
</dbReference>
<dbReference type="InterPro" id="IPR036645">
    <property type="entry name" value="Elafin-like_sf"/>
</dbReference>
<dbReference type="SUPFAM" id="SSF57256">
    <property type="entry name" value="Elafin-like"/>
    <property type="match status" value="1"/>
</dbReference>
<reference key="1">
    <citation type="journal article" date="1992" name="Infect. Immun.">
        <title>eNAP-2, a novel cysteine-rich bactericidal peptide from equine leukocytes.</title>
        <authorList>
            <person name="Couto M.A."/>
            <person name="Harwig S.S.L."/>
            <person name="Cullor J.S."/>
            <person name="Hughes J.P."/>
            <person name="Lehrer R.I."/>
        </authorList>
    </citation>
    <scope>PROTEIN SEQUENCE</scope>
    <scope>ANTIBACTERIAL ACTIVITY</scope>
    <source>
        <tissue>Neutrophil</tissue>
    </source>
</reference>
<reference key="2">
    <citation type="journal article" date="1993" name="Infect. Immun.">
        <title>Selective inhibition of microbial serine proteases by eNAP-2, an antimicrobial peptide from equine neutrophils.</title>
        <authorList>
            <person name="Couto M.A."/>
            <person name="Harwig S.S.L."/>
            <person name="Lehrer R.I."/>
        </authorList>
    </citation>
    <scope>ANTIPROTEASE ACTIVITY</scope>
</reference>
<evidence type="ECO:0000255" key="1">
    <source>
        <dbReference type="PROSITE-ProRule" id="PRU00722"/>
    </source>
</evidence>
<accession>P56928</accession>
<organism>
    <name type="scientific">Equus caballus</name>
    <name type="common">Horse</name>
    <dbReference type="NCBI Taxonomy" id="9796"/>
    <lineage>
        <taxon>Eukaryota</taxon>
        <taxon>Metazoa</taxon>
        <taxon>Chordata</taxon>
        <taxon>Craniata</taxon>
        <taxon>Vertebrata</taxon>
        <taxon>Euteleostomi</taxon>
        <taxon>Mammalia</taxon>
        <taxon>Eutheria</taxon>
        <taxon>Laurasiatheria</taxon>
        <taxon>Perissodactyla</taxon>
        <taxon>Equidae</taxon>
        <taxon>Equus</taxon>
    </lineage>
</organism>